<reference key="1">
    <citation type="journal article" date="2007" name="Science">
        <title>Sea anemone genome reveals ancestral eumetazoan gene repertoire and genomic organization.</title>
        <authorList>
            <person name="Putnam N.H."/>
            <person name="Srivastava M."/>
            <person name="Hellsten U."/>
            <person name="Dirks B."/>
            <person name="Chapman J."/>
            <person name="Salamov A."/>
            <person name="Terry A."/>
            <person name="Shapiro H."/>
            <person name="Lindquist E."/>
            <person name="Kapitonov V.V."/>
            <person name="Jurka J."/>
            <person name="Genikhovich G."/>
            <person name="Grigoriev I.V."/>
            <person name="Lucas S.M."/>
            <person name="Steele R.E."/>
            <person name="Finnerty J.R."/>
            <person name="Technau U."/>
            <person name="Martindale M.Q."/>
            <person name="Rokhsar D.S."/>
        </authorList>
    </citation>
    <scope>NUCLEOTIDE SEQUENCE [LARGE SCALE GENOMIC DNA]</scope>
    <source>
        <strain>CH2 X CH6</strain>
    </source>
</reference>
<proteinExistence type="inferred from homology"/>
<name>PLK4_NEMVE</name>
<feature type="chain" id="PRO_0000385285" description="Serine/threonine-protein kinase PLK4">
    <location>
        <begin position="1"/>
        <end position="978"/>
    </location>
</feature>
<feature type="domain" description="Protein kinase" evidence="3">
    <location>
        <begin position="13"/>
        <end position="266"/>
    </location>
</feature>
<feature type="domain" description="Cryptic POLO box 1 (CPB1)" evidence="4">
    <location>
        <begin position="565"/>
        <end position="678"/>
    </location>
</feature>
<feature type="domain" description="Cryptic POLO box 2 (CPB2)" evidence="5">
    <location>
        <begin position="679"/>
        <end position="792"/>
    </location>
</feature>
<feature type="domain" description="POLO box" evidence="2">
    <location>
        <begin position="895"/>
        <end position="973"/>
    </location>
</feature>
<feature type="region of interest" description="Disordered" evidence="6">
    <location>
        <begin position="271"/>
        <end position="381"/>
    </location>
</feature>
<feature type="region of interest" description="Disordered" evidence="6">
    <location>
        <begin position="489"/>
        <end position="578"/>
    </location>
</feature>
<feature type="region of interest" description="Disordered" evidence="6">
    <location>
        <begin position="788"/>
        <end position="818"/>
    </location>
</feature>
<feature type="region of interest" description="Disordered" evidence="6">
    <location>
        <begin position="838"/>
        <end position="869"/>
    </location>
</feature>
<feature type="compositionally biased region" description="Polar residues" evidence="6">
    <location>
        <begin position="271"/>
        <end position="282"/>
    </location>
</feature>
<feature type="compositionally biased region" description="Polar residues" evidence="6">
    <location>
        <begin position="291"/>
        <end position="304"/>
    </location>
</feature>
<feature type="compositionally biased region" description="Basic and acidic residues" evidence="6">
    <location>
        <begin position="324"/>
        <end position="335"/>
    </location>
</feature>
<feature type="compositionally biased region" description="Polar residues" evidence="6">
    <location>
        <begin position="351"/>
        <end position="362"/>
    </location>
</feature>
<feature type="compositionally biased region" description="Polar residues" evidence="6">
    <location>
        <begin position="371"/>
        <end position="381"/>
    </location>
</feature>
<feature type="compositionally biased region" description="Basic and acidic residues" evidence="6">
    <location>
        <begin position="518"/>
        <end position="527"/>
    </location>
</feature>
<feature type="compositionally biased region" description="Basic and acidic residues" evidence="6">
    <location>
        <begin position="536"/>
        <end position="566"/>
    </location>
</feature>
<feature type="compositionally biased region" description="Polar residues" evidence="6">
    <location>
        <begin position="801"/>
        <end position="818"/>
    </location>
</feature>
<feature type="compositionally biased region" description="Basic residues" evidence="6">
    <location>
        <begin position="848"/>
        <end position="862"/>
    </location>
</feature>
<feature type="active site" description="Proton acceptor" evidence="3">
    <location>
        <position position="137"/>
    </location>
</feature>
<feature type="binding site" evidence="3">
    <location>
        <begin position="19"/>
        <end position="27"/>
    </location>
    <ligand>
        <name>ATP</name>
        <dbReference type="ChEBI" id="CHEBI:30616"/>
    </ligand>
</feature>
<feature type="binding site" evidence="3">
    <location>
        <position position="42"/>
    </location>
    <ligand>
        <name>ATP</name>
        <dbReference type="ChEBI" id="CHEBI:30616"/>
    </ligand>
</feature>
<accession>A7SNN5</accession>
<protein>
    <recommendedName>
        <fullName>Serine/threonine-protein kinase PLK4</fullName>
        <ecNumber>2.7.11.21</ecNumber>
    </recommendedName>
    <alternativeName>
        <fullName>Polo-like kinase 4</fullName>
        <shortName>PLK-4</shortName>
    </alternativeName>
</protein>
<gene>
    <name type="ORF">v1g246408</name>
</gene>
<dbReference type="EC" id="2.7.11.21"/>
<dbReference type="EMBL" id="DS469722">
    <property type="protein sequence ID" value="EDO34707.1"/>
    <property type="molecule type" value="Genomic_DNA"/>
</dbReference>
<dbReference type="RefSeq" id="XP_001626807.1">
    <property type="nucleotide sequence ID" value="XM_001626757.1"/>
</dbReference>
<dbReference type="SMR" id="A7SNN5"/>
<dbReference type="STRING" id="45351.A7SNN5"/>
<dbReference type="EnsemblMetazoa" id="EDO34707">
    <property type="protein sequence ID" value="EDO34707"/>
    <property type="gene ID" value="NEMVEDRAFT_v1g246408"/>
</dbReference>
<dbReference type="KEGG" id="nve:5506045"/>
<dbReference type="eggNOG" id="KOG0575">
    <property type="taxonomic scope" value="Eukaryota"/>
</dbReference>
<dbReference type="HOGENOM" id="CLU_008726_1_0_1"/>
<dbReference type="InParanoid" id="A7SNN5"/>
<dbReference type="OMA" id="NIVERCH"/>
<dbReference type="OrthoDB" id="10004143at2759"/>
<dbReference type="PhylomeDB" id="A7SNN5"/>
<dbReference type="Proteomes" id="UP000001593">
    <property type="component" value="Unassembled WGS sequence"/>
</dbReference>
<dbReference type="GO" id="GO:0005814">
    <property type="term" value="C:centriole"/>
    <property type="evidence" value="ECO:0007669"/>
    <property type="project" value="UniProtKB-SubCell"/>
</dbReference>
<dbReference type="GO" id="GO:0005737">
    <property type="term" value="C:cytoplasm"/>
    <property type="evidence" value="ECO:0007669"/>
    <property type="project" value="UniProtKB-KW"/>
</dbReference>
<dbReference type="GO" id="GO:0005634">
    <property type="term" value="C:nucleus"/>
    <property type="evidence" value="ECO:0000318"/>
    <property type="project" value="GO_Central"/>
</dbReference>
<dbReference type="GO" id="GO:0005524">
    <property type="term" value="F:ATP binding"/>
    <property type="evidence" value="ECO:0007669"/>
    <property type="project" value="UniProtKB-KW"/>
</dbReference>
<dbReference type="GO" id="GO:0106310">
    <property type="term" value="F:protein serine kinase activity"/>
    <property type="evidence" value="ECO:0007669"/>
    <property type="project" value="RHEA"/>
</dbReference>
<dbReference type="GO" id="GO:0004674">
    <property type="term" value="F:protein serine/threonine kinase activity"/>
    <property type="evidence" value="ECO:0007669"/>
    <property type="project" value="UniProtKB-KW"/>
</dbReference>
<dbReference type="CDD" id="cd13114">
    <property type="entry name" value="POLO_box_Plk4_1"/>
    <property type="match status" value="1"/>
</dbReference>
<dbReference type="CDD" id="cd13115">
    <property type="entry name" value="POLO_box_Plk4_2"/>
    <property type="match status" value="1"/>
</dbReference>
<dbReference type="CDD" id="cd13116">
    <property type="entry name" value="POLO_box_Plk4_3"/>
    <property type="match status" value="1"/>
</dbReference>
<dbReference type="FunFam" id="3.30.200.20:FF:000221">
    <property type="entry name" value="Putative serine/threonine-protein kinase PLK4"/>
    <property type="match status" value="1"/>
</dbReference>
<dbReference type="FunFam" id="1.10.510.10:FF:000576">
    <property type="entry name" value="Serine/threonine-protein kinase PLK4"/>
    <property type="match status" value="1"/>
</dbReference>
<dbReference type="FunFam" id="2.40.50.930:FF:000001">
    <property type="entry name" value="Serine/threonine-protein kinase PLK4"/>
    <property type="match status" value="1"/>
</dbReference>
<dbReference type="Gene3D" id="2.40.50.930">
    <property type="match status" value="1"/>
</dbReference>
<dbReference type="Gene3D" id="3.30.1120.120">
    <property type="match status" value="1"/>
</dbReference>
<dbReference type="Gene3D" id="3.30.1120.130">
    <property type="match status" value="1"/>
</dbReference>
<dbReference type="Gene3D" id="1.10.510.10">
    <property type="entry name" value="Transferase(Phosphotransferase) domain 1"/>
    <property type="match status" value="1"/>
</dbReference>
<dbReference type="InterPro" id="IPR011009">
    <property type="entry name" value="Kinase-like_dom_sf"/>
</dbReference>
<dbReference type="InterPro" id="IPR047108">
    <property type="entry name" value="Plk4-like_POLO_box_2_sf"/>
</dbReference>
<dbReference type="InterPro" id="IPR000959">
    <property type="entry name" value="POLO_box_dom"/>
</dbReference>
<dbReference type="InterPro" id="IPR033699">
    <property type="entry name" value="POLO_box_Plk4_1"/>
</dbReference>
<dbReference type="InterPro" id="IPR033698">
    <property type="entry name" value="POLO_box_Plk4_2"/>
</dbReference>
<dbReference type="InterPro" id="IPR033696">
    <property type="entry name" value="POLO_box_Plk4_C"/>
</dbReference>
<dbReference type="InterPro" id="IPR000719">
    <property type="entry name" value="Prot_kinase_dom"/>
</dbReference>
<dbReference type="InterPro" id="IPR017441">
    <property type="entry name" value="Protein_kinase_ATP_BS"/>
</dbReference>
<dbReference type="InterPro" id="IPR046437">
    <property type="entry name" value="Ser_Thr-PK_POLO_box_1_sf"/>
</dbReference>
<dbReference type="InterPro" id="IPR008266">
    <property type="entry name" value="Tyr_kinase_AS"/>
</dbReference>
<dbReference type="PANTHER" id="PTHR24345">
    <property type="entry name" value="SERINE/THREONINE-PROTEIN KINASE PLK"/>
    <property type="match status" value="1"/>
</dbReference>
<dbReference type="PANTHER" id="PTHR24345:SF91">
    <property type="entry name" value="SERINE_THREONINE-PROTEIN KINASE PLK4"/>
    <property type="match status" value="1"/>
</dbReference>
<dbReference type="Pfam" id="PF00069">
    <property type="entry name" value="Pkinase"/>
    <property type="match status" value="1"/>
</dbReference>
<dbReference type="Pfam" id="PF18190">
    <property type="entry name" value="Plk4_PB1"/>
    <property type="match status" value="1"/>
</dbReference>
<dbReference type="Pfam" id="PF18409">
    <property type="entry name" value="Plk4_PB2"/>
    <property type="match status" value="1"/>
</dbReference>
<dbReference type="SUPFAM" id="SSF82615">
    <property type="entry name" value="Polo-box domain"/>
    <property type="match status" value="1"/>
</dbReference>
<dbReference type="SUPFAM" id="SSF56112">
    <property type="entry name" value="Protein kinase-like (PK-like)"/>
    <property type="match status" value="1"/>
</dbReference>
<dbReference type="PROSITE" id="PS51984">
    <property type="entry name" value="CPB1"/>
    <property type="match status" value="1"/>
</dbReference>
<dbReference type="PROSITE" id="PS51985">
    <property type="entry name" value="CPB2"/>
    <property type="match status" value="1"/>
</dbReference>
<dbReference type="PROSITE" id="PS50078">
    <property type="entry name" value="POLO_BOX"/>
    <property type="match status" value="1"/>
</dbReference>
<dbReference type="PROSITE" id="PS00107">
    <property type="entry name" value="PROTEIN_KINASE_ATP"/>
    <property type="match status" value="1"/>
</dbReference>
<dbReference type="PROSITE" id="PS50011">
    <property type="entry name" value="PROTEIN_KINASE_DOM"/>
    <property type="match status" value="1"/>
</dbReference>
<keyword id="KW-0067">ATP-binding</keyword>
<keyword id="KW-0963">Cytoplasm</keyword>
<keyword id="KW-0206">Cytoskeleton</keyword>
<keyword id="KW-0418">Kinase</keyword>
<keyword id="KW-0547">Nucleotide-binding</keyword>
<keyword id="KW-1185">Reference proteome</keyword>
<keyword id="KW-0723">Serine/threonine-protein kinase</keyword>
<keyword id="KW-0808">Transferase</keyword>
<keyword id="KW-0832">Ubl conjugation</keyword>
<evidence type="ECO:0000250" key="1"/>
<evidence type="ECO:0000255" key="2">
    <source>
        <dbReference type="PROSITE-ProRule" id="PRU00154"/>
    </source>
</evidence>
<evidence type="ECO:0000255" key="3">
    <source>
        <dbReference type="PROSITE-ProRule" id="PRU00159"/>
    </source>
</evidence>
<evidence type="ECO:0000255" key="4">
    <source>
        <dbReference type="PROSITE-ProRule" id="PRU01328"/>
    </source>
</evidence>
<evidence type="ECO:0000255" key="5">
    <source>
        <dbReference type="PROSITE-ProRule" id="PRU01329"/>
    </source>
</evidence>
<evidence type="ECO:0000256" key="6">
    <source>
        <dbReference type="SAM" id="MobiDB-lite"/>
    </source>
</evidence>
<organism>
    <name type="scientific">Nematostella vectensis</name>
    <name type="common">Starlet sea anemone</name>
    <dbReference type="NCBI Taxonomy" id="45351"/>
    <lineage>
        <taxon>Eukaryota</taxon>
        <taxon>Metazoa</taxon>
        <taxon>Cnidaria</taxon>
        <taxon>Anthozoa</taxon>
        <taxon>Hexacorallia</taxon>
        <taxon>Actiniaria</taxon>
        <taxon>Edwardsiidae</taxon>
        <taxon>Nematostella</taxon>
    </lineage>
</organism>
<comment type="function">
    <text evidence="1">Serine/threonine-protein kinase that plays a central role in centriole duplication. Able to trigger procentriole formation on the surface of the mother centriole cylinder, leading to the recruitment of centriole biogenesis proteins. When overexpressed, it is able to induce centrosome amplification through the simultaneous generation of multiple procentrioles adjoining each parental centriole during S phase (By similarity).</text>
</comment>
<comment type="catalytic activity">
    <reaction>
        <text>L-seryl-[protein] + ATP = O-phospho-L-seryl-[protein] + ADP + H(+)</text>
        <dbReference type="Rhea" id="RHEA:17989"/>
        <dbReference type="Rhea" id="RHEA-COMP:9863"/>
        <dbReference type="Rhea" id="RHEA-COMP:11604"/>
        <dbReference type="ChEBI" id="CHEBI:15378"/>
        <dbReference type="ChEBI" id="CHEBI:29999"/>
        <dbReference type="ChEBI" id="CHEBI:30616"/>
        <dbReference type="ChEBI" id="CHEBI:83421"/>
        <dbReference type="ChEBI" id="CHEBI:456216"/>
        <dbReference type="EC" id="2.7.11.21"/>
    </reaction>
</comment>
<comment type="catalytic activity">
    <reaction>
        <text>L-threonyl-[protein] + ATP = O-phospho-L-threonyl-[protein] + ADP + H(+)</text>
        <dbReference type="Rhea" id="RHEA:46608"/>
        <dbReference type="Rhea" id="RHEA-COMP:11060"/>
        <dbReference type="Rhea" id="RHEA-COMP:11605"/>
        <dbReference type="ChEBI" id="CHEBI:15378"/>
        <dbReference type="ChEBI" id="CHEBI:30013"/>
        <dbReference type="ChEBI" id="CHEBI:30616"/>
        <dbReference type="ChEBI" id="CHEBI:61977"/>
        <dbReference type="ChEBI" id="CHEBI:456216"/>
        <dbReference type="EC" id="2.7.11.21"/>
    </reaction>
</comment>
<comment type="subunit">
    <text evidence="1">Homodimer.</text>
</comment>
<comment type="subcellular location">
    <subcellularLocation>
        <location evidence="1">Cytoplasm</location>
        <location evidence="1">Cytoskeleton</location>
        <location evidence="1">Microtubule organizing center</location>
        <location evidence="1">Centrosome</location>
        <location evidence="1">Centriole</location>
    </subcellularLocation>
</comment>
<comment type="PTM">
    <text evidence="1">Ubiquitinated; leading to its degradation by the proteasome.</text>
</comment>
<comment type="similarity">
    <text evidence="3 4 5">Belongs to the protein kinase superfamily. Ser/Thr protein kinase family. CDC5/Polo subfamily.</text>
</comment>
<sequence length="978" mass="108146">MTTQYMGDSIEDFQVLDLLGKGGFACVYRGRCLATGQEVAIKMIDKKAMRTAGMVNRVCNEVEIHCRLKHPSILELYTYFEDDNYVYLVLELAENGEANRYLRKQGHTLKESEVRRIMLQVVKGVLYLHSHGIIHRDLSLGNILLSSDMDAKIADFGLATRLSLPDEKHYTMCGTPNYISPEIATRDPHGLESDVWSIGCMLFTLLVGKPPFDTEAVRSTLNKVVLAEYDIPNHVSIEARDLISKLLKKNPQDRLTLSGILDHPFITNQTLNTKYSSPTRQHLNPRAYENSLDSGTGTMATISTGHAPFQQDNRHAVKSSSAERTSDIWPRDPKHPPSPPVRQRPSSCPSTENVTTGSSSHVRGSDVAQPAQYSGLKTRTSDSWLSDIHSSKIPKLPQKPLVGLDKMNGIQSKFKSYNATKYSSYYGSTLGDILHLAGQQNGTNTSSSGFYSADTKSYSANHGLKTSSTDHNNKESCQTRDNHMYEKSIEQPSATKSEHSRAYSSQDSRPHSHHKRHGSDSVSKDFDASPQPSQGESRRRQNHRSDSERQTRRAEKSRSGGRDKSLGELTEPLNAERLRPIRQKTRNAVVSITDEAEVCLEFLQQKGGQSIVTEVIRIASNGMKISVYQPSEAEKVLGSEPPLPPSAGNGSYLFPSLPSKYWKKYKYAAKFVQLVRKLTPKVTLYSKHAKCVLMENYPHADFEVCFYNGAKVHQSQECTRIIEPGGVSYTLESVGGIEGVPVEMRKLIQHVKAAYQQCVRLERIIMQEEKESNGNQYFPFIVGRRPPAWKNSSGKSEKQDQQGCSNGQSQPVLPSSPSIAAPAMTSLLSFDGTIASTAQTTNPAFPGKSRKTSPSKTSRHKQSPAQPIPAEVANAKTDPSPHHYVEGSSPIPSAHVCKMAFVDGVGWSSQLTTGEVWIQYTDGSQIIFHAAAAAIKFTDSTGNVTRYGYADRLPSVIKEKLSHLPAVIKTLATTSKVS</sequence>